<accession>B1YL11</accession>
<proteinExistence type="inferred from homology"/>
<protein>
    <recommendedName>
        <fullName evidence="1">Imidazole glycerol phosphate synthase subunit HisH</fullName>
        <ecNumber evidence="1">4.3.2.10</ecNumber>
    </recommendedName>
    <alternativeName>
        <fullName evidence="1">IGP synthase glutaminase subunit</fullName>
        <ecNumber evidence="1">3.5.1.2</ecNumber>
    </alternativeName>
    <alternativeName>
        <fullName evidence="1">IGP synthase subunit HisH</fullName>
    </alternativeName>
    <alternativeName>
        <fullName evidence="1">ImGP synthase subunit HisH</fullName>
        <shortName evidence="1">IGPS subunit HisH</shortName>
    </alternativeName>
</protein>
<keyword id="KW-0028">Amino-acid biosynthesis</keyword>
<keyword id="KW-0963">Cytoplasm</keyword>
<keyword id="KW-0315">Glutamine amidotransferase</keyword>
<keyword id="KW-0368">Histidine biosynthesis</keyword>
<keyword id="KW-0378">Hydrolase</keyword>
<keyword id="KW-0456">Lyase</keyword>
<keyword id="KW-1185">Reference proteome</keyword>
<organism>
    <name type="scientific">Exiguobacterium sibiricum (strain DSM 17290 / CCUG 55495 / CIP 109462 / JCM 13490 / 255-15)</name>
    <dbReference type="NCBI Taxonomy" id="262543"/>
    <lineage>
        <taxon>Bacteria</taxon>
        <taxon>Bacillati</taxon>
        <taxon>Bacillota</taxon>
        <taxon>Bacilli</taxon>
        <taxon>Bacillales</taxon>
        <taxon>Bacillales Family XII. Incertae Sedis</taxon>
        <taxon>Exiguobacterium</taxon>
    </lineage>
</organism>
<name>HIS5_EXIS2</name>
<reference key="1">
    <citation type="submission" date="2008-04" db="EMBL/GenBank/DDBJ databases">
        <title>Complete sequence of chromosome of Exiguobacterium sibiricum 255-15.</title>
        <authorList>
            <consortium name="US DOE Joint Genome Institute"/>
            <person name="Copeland A."/>
            <person name="Lucas S."/>
            <person name="Lapidus A."/>
            <person name="Glavina del Rio T."/>
            <person name="Dalin E."/>
            <person name="Tice H."/>
            <person name="Bruce D."/>
            <person name="Goodwin L."/>
            <person name="Pitluck S."/>
            <person name="Kiss H."/>
            <person name="Chertkov O."/>
            <person name="Monk C."/>
            <person name="Brettin T."/>
            <person name="Detter J.C."/>
            <person name="Han C."/>
            <person name="Kuske C.R."/>
            <person name="Schmutz J."/>
            <person name="Larimer F."/>
            <person name="Land M."/>
            <person name="Hauser L."/>
            <person name="Kyrpides N."/>
            <person name="Mikhailova N."/>
            <person name="Vishnivetskaya T."/>
            <person name="Rodrigues D.F."/>
            <person name="Gilichinsky D."/>
            <person name="Tiedje J."/>
            <person name="Richardson P."/>
        </authorList>
    </citation>
    <scope>NUCLEOTIDE SEQUENCE [LARGE SCALE GENOMIC DNA]</scope>
    <source>
        <strain>DSM 17290 / CCUG 55495 / CIP 109462 / JCM 13490 / 255-15</strain>
    </source>
</reference>
<dbReference type="EC" id="4.3.2.10" evidence="1"/>
<dbReference type="EC" id="3.5.1.2" evidence="1"/>
<dbReference type="EMBL" id="CP001022">
    <property type="protein sequence ID" value="ACB61813.1"/>
    <property type="molecule type" value="Genomic_DNA"/>
</dbReference>
<dbReference type="RefSeq" id="WP_012371229.1">
    <property type="nucleotide sequence ID" value="NC_010556.1"/>
</dbReference>
<dbReference type="SMR" id="B1YL11"/>
<dbReference type="STRING" id="262543.Exig_2363"/>
<dbReference type="MEROPS" id="C26.965"/>
<dbReference type="KEGG" id="esi:Exig_2363"/>
<dbReference type="eggNOG" id="COG0118">
    <property type="taxonomic scope" value="Bacteria"/>
</dbReference>
<dbReference type="HOGENOM" id="CLU_071837_2_2_9"/>
<dbReference type="OrthoDB" id="9807137at2"/>
<dbReference type="UniPathway" id="UPA00031">
    <property type="reaction ID" value="UER00010"/>
</dbReference>
<dbReference type="Proteomes" id="UP000001681">
    <property type="component" value="Chromosome"/>
</dbReference>
<dbReference type="GO" id="GO:0005737">
    <property type="term" value="C:cytoplasm"/>
    <property type="evidence" value="ECO:0007669"/>
    <property type="project" value="UniProtKB-SubCell"/>
</dbReference>
<dbReference type="GO" id="GO:0004359">
    <property type="term" value="F:glutaminase activity"/>
    <property type="evidence" value="ECO:0007669"/>
    <property type="project" value="UniProtKB-EC"/>
</dbReference>
<dbReference type="GO" id="GO:0000107">
    <property type="term" value="F:imidazoleglycerol-phosphate synthase activity"/>
    <property type="evidence" value="ECO:0007669"/>
    <property type="project" value="UniProtKB-UniRule"/>
</dbReference>
<dbReference type="GO" id="GO:0016829">
    <property type="term" value="F:lyase activity"/>
    <property type="evidence" value="ECO:0007669"/>
    <property type="project" value="UniProtKB-KW"/>
</dbReference>
<dbReference type="GO" id="GO:0000105">
    <property type="term" value="P:L-histidine biosynthetic process"/>
    <property type="evidence" value="ECO:0007669"/>
    <property type="project" value="UniProtKB-UniRule"/>
</dbReference>
<dbReference type="CDD" id="cd01748">
    <property type="entry name" value="GATase1_IGP_Synthase"/>
    <property type="match status" value="1"/>
</dbReference>
<dbReference type="Gene3D" id="3.40.50.880">
    <property type="match status" value="1"/>
</dbReference>
<dbReference type="HAMAP" id="MF_00278">
    <property type="entry name" value="HisH"/>
    <property type="match status" value="1"/>
</dbReference>
<dbReference type="InterPro" id="IPR029062">
    <property type="entry name" value="Class_I_gatase-like"/>
</dbReference>
<dbReference type="InterPro" id="IPR017926">
    <property type="entry name" value="GATASE"/>
</dbReference>
<dbReference type="InterPro" id="IPR010139">
    <property type="entry name" value="Imidazole-glycPsynth_HisH"/>
</dbReference>
<dbReference type="NCBIfam" id="TIGR01855">
    <property type="entry name" value="IMP_synth_hisH"/>
    <property type="match status" value="1"/>
</dbReference>
<dbReference type="PANTHER" id="PTHR42701">
    <property type="entry name" value="IMIDAZOLE GLYCEROL PHOSPHATE SYNTHASE SUBUNIT HISH"/>
    <property type="match status" value="1"/>
</dbReference>
<dbReference type="PANTHER" id="PTHR42701:SF1">
    <property type="entry name" value="IMIDAZOLE GLYCEROL PHOSPHATE SYNTHASE SUBUNIT HISH"/>
    <property type="match status" value="1"/>
</dbReference>
<dbReference type="Pfam" id="PF00117">
    <property type="entry name" value="GATase"/>
    <property type="match status" value="1"/>
</dbReference>
<dbReference type="PIRSF" id="PIRSF000495">
    <property type="entry name" value="Amidotransf_hisH"/>
    <property type="match status" value="1"/>
</dbReference>
<dbReference type="SUPFAM" id="SSF52317">
    <property type="entry name" value="Class I glutamine amidotransferase-like"/>
    <property type="match status" value="1"/>
</dbReference>
<dbReference type="PROSITE" id="PS51273">
    <property type="entry name" value="GATASE_TYPE_1"/>
    <property type="match status" value="1"/>
</dbReference>
<evidence type="ECO:0000255" key="1">
    <source>
        <dbReference type="HAMAP-Rule" id="MF_00278"/>
    </source>
</evidence>
<comment type="function">
    <text evidence="1">IGPS catalyzes the conversion of PRFAR and glutamine to IGP, AICAR and glutamate. The HisH subunit catalyzes the hydrolysis of glutamine to glutamate and ammonia as part of the synthesis of IGP and AICAR. The resulting ammonia molecule is channeled to the active site of HisF.</text>
</comment>
<comment type="catalytic activity">
    <reaction evidence="1">
        <text>5-[(5-phospho-1-deoxy-D-ribulos-1-ylimino)methylamino]-1-(5-phospho-beta-D-ribosyl)imidazole-4-carboxamide + L-glutamine = D-erythro-1-(imidazol-4-yl)glycerol 3-phosphate + 5-amino-1-(5-phospho-beta-D-ribosyl)imidazole-4-carboxamide + L-glutamate + H(+)</text>
        <dbReference type="Rhea" id="RHEA:24793"/>
        <dbReference type="ChEBI" id="CHEBI:15378"/>
        <dbReference type="ChEBI" id="CHEBI:29985"/>
        <dbReference type="ChEBI" id="CHEBI:58278"/>
        <dbReference type="ChEBI" id="CHEBI:58359"/>
        <dbReference type="ChEBI" id="CHEBI:58475"/>
        <dbReference type="ChEBI" id="CHEBI:58525"/>
        <dbReference type="EC" id="4.3.2.10"/>
    </reaction>
</comment>
<comment type="catalytic activity">
    <reaction evidence="1">
        <text>L-glutamine + H2O = L-glutamate + NH4(+)</text>
        <dbReference type="Rhea" id="RHEA:15889"/>
        <dbReference type="ChEBI" id="CHEBI:15377"/>
        <dbReference type="ChEBI" id="CHEBI:28938"/>
        <dbReference type="ChEBI" id="CHEBI:29985"/>
        <dbReference type="ChEBI" id="CHEBI:58359"/>
        <dbReference type="EC" id="3.5.1.2"/>
    </reaction>
</comment>
<comment type="pathway">
    <text evidence="1">Amino-acid biosynthesis; L-histidine biosynthesis; L-histidine from 5-phospho-alpha-D-ribose 1-diphosphate: step 5/9.</text>
</comment>
<comment type="subunit">
    <text evidence="1">Heterodimer of HisH and HisF.</text>
</comment>
<comment type="subcellular location">
    <subcellularLocation>
        <location evidence="1">Cytoplasm</location>
    </subcellularLocation>
</comment>
<feature type="chain" id="PRO_1000114779" description="Imidazole glycerol phosphate synthase subunit HisH">
    <location>
        <begin position="1"/>
        <end position="195"/>
    </location>
</feature>
<feature type="domain" description="Glutamine amidotransferase type-1" evidence="1">
    <location>
        <begin position="1"/>
        <end position="193"/>
    </location>
</feature>
<feature type="active site" description="Nucleophile" evidence="1">
    <location>
        <position position="78"/>
    </location>
</feature>
<feature type="active site" evidence="1">
    <location>
        <position position="168"/>
    </location>
</feature>
<feature type="active site" evidence="1">
    <location>
        <position position="170"/>
    </location>
</feature>
<sequence length="195" mass="21290">MIAIVDYGVGNIANIERALKELGEAVIVTSDLELLGQAEALVLPGVGAYAPAMARLEETGLIEFLQEQATKKPFLGICLGMQLLFESSDEDGQTEGLGILPGTVEKLPSDVRLPHMGWHQLKNHGEAVYFVHSYGAVCDPDWIVDSVEYGRLVPAIVQKDLVTGMQFHPEKSGEVGLKLLKEWRETTCNSTQQSI</sequence>
<gene>
    <name evidence="1" type="primary">hisH</name>
    <name type="ordered locus">Exig_2363</name>
</gene>